<reference key="1">
    <citation type="journal article" date="2011" name="Phytochemistry">
        <title>RNAi-mediated down-regulation of ornithine decarboxylase (ODC) leads to reduced nicotine and increased anatabine levels in transgenic Nicotiana tabacum L.</title>
        <authorList>
            <person name="DeBoer K.D."/>
            <person name="Dalton H.L."/>
            <person name="Edward F.J."/>
            <person name="Hamill J.D."/>
        </authorList>
    </citation>
    <scope>NUCLEOTIDE SEQUENCE [GENOMIC DNA]</scope>
    <scope>FUNCTION</scope>
    <scope>DISRUPTION PHENOTYPE</scope>
    <scope>PATHWAY</scope>
    <source>
        <strain>cv. Melbourne 1</strain>
        <tissue>Leaf</tissue>
    </source>
</reference>
<reference key="2">
    <citation type="journal article" date="2004" name="Funct. Plant Biol.">
        <title>Analysis of wound-induced gene expression in Nicotiana species with contrasting alkaloid profiles.</title>
        <authorList>
            <person name="Sinclair S.J."/>
            <person name="Johnson R."/>
            <person name="Hamill J.D."/>
        </authorList>
    </citation>
    <scope>INDUCTION BY WOUNDING</scope>
</reference>
<comment type="function">
    <text evidence="4 6">Involved in the biosynthesis of pyridine alkaloid natural products, leading mainly to the production of anabasine, anatabine, nicotine and nornicotine, effective deterrents against herbivores with antiparasitic and pesticide properties (neurotoxins); nornicotine serves as the precursor in the synthesis of the carcinogen compound N'-nitrosonornicotine (NNN) (PubMed:21232776). Catalyzes the first and rate-limiting step of polyamine biosynthesis that converts ornithine into putrescine, which is the precursor for the polyamines, spermidine and spermine (By similarity). Polyamines are essential for cell proliferation and are implicated in cellular processes, ranging from DNA replication to apoptosis (By similarity).</text>
</comment>
<comment type="catalytic activity">
    <reaction evidence="4">
        <text>L-ornithine + H(+) = putrescine + CO2</text>
        <dbReference type="Rhea" id="RHEA:22964"/>
        <dbReference type="ChEBI" id="CHEBI:15378"/>
        <dbReference type="ChEBI" id="CHEBI:16526"/>
        <dbReference type="ChEBI" id="CHEBI:46911"/>
        <dbReference type="ChEBI" id="CHEBI:326268"/>
        <dbReference type="EC" id="4.1.1.17"/>
    </reaction>
</comment>
<comment type="cofactor">
    <cofactor evidence="4">
        <name>pyridoxal 5'-phosphate</name>
        <dbReference type="ChEBI" id="CHEBI:597326"/>
    </cofactor>
</comment>
<comment type="pathway">
    <text evidence="6">Alkaloid biosynthesis; nicotine biosynthesis.</text>
</comment>
<comment type="pathway">
    <text evidence="1">Amine and polyamine biosynthesis; putrescine biosynthesis via L-ornithine pathway; putrescine from L-ornithine: step 1/1.</text>
</comment>
<comment type="subunit">
    <text evidence="4">Homodimer. Only the dimer is catalytically active, as the active sites are constructed of residues from both monomers.</text>
</comment>
<comment type="subcellular location">
    <subcellularLocation>
        <location evidence="5">Plastid</location>
        <location evidence="5">Chloroplast</location>
    </subcellularLocation>
</comment>
<comment type="induction">
    <text evidence="7">Induced by wounding.</text>
</comment>
<comment type="disruption phenotype">
    <text evidence="6">Reduced nicotine but increased anatabine contents; these phenotypes are enhanced upon treatment with jasmonic acid (MeJA) and wounding (e.g. removal of apices).</text>
</comment>
<comment type="similarity">
    <text evidence="9">Belongs to the Orn/Lys/Arg decarboxylase class-II family.</text>
</comment>
<accession>E0WN94</accession>
<sequence>MAGQTIIVSGLNPAAILQSTIGGGASPTAAAAAENGTRKVIPLSRDALQDFMLSIITQKLQDEKQPFYVLDLGEVVSLMDQWKSALPNIRPFYAVKCNPEPSFLSILSAMGSNFDCASRAEIEYVLALGISPDRIVFANPCKPESDIIFAAKVGVNLTTYDSEDEVYKIRKHHPKSELLLRIKPMFDGNARCPMGPKYGALPEEVEPLLRAAQAARLTVSGVSFHIGSGDADSNAYLGAIAAAKEVFETAAKLGMSKMTVLDVGGGFTSGHQFTAAAVAVKSALKQRFDDEPELTIIAEPGRFFAETAFTLATTIIGKRVRGELREYWINDGLYGSMNCVLYDHATVNATPLAVQSNRSNVTCGGSKTFPTTVFGPTCDALDTVLRDYQLPELQVNDWLVFPNMGAYTKAAGSNFNGFNTSAIVTHLAYAYPS</sequence>
<evidence type="ECO:0000250" key="1">
    <source>
        <dbReference type="UniProtKB" id="O22616"/>
    </source>
</evidence>
<evidence type="ECO:0000250" key="2">
    <source>
        <dbReference type="UniProtKB" id="P00860"/>
    </source>
</evidence>
<evidence type="ECO:0000250" key="3">
    <source>
        <dbReference type="UniProtKB" id="P07805"/>
    </source>
</evidence>
<evidence type="ECO:0000250" key="4">
    <source>
        <dbReference type="UniProtKB" id="P11926"/>
    </source>
</evidence>
<evidence type="ECO:0000255" key="5"/>
<evidence type="ECO:0000269" key="6">
    <source>
    </source>
</evidence>
<evidence type="ECO:0000269" key="7">
    <source>
    </source>
</evidence>
<evidence type="ECO:0000303" key="8">
    <source>
    </source>
</evidence>
<evidence type="ECO:0000305" key="9"/>
<keyword id="KW-0017">Alkaloid metabolism</keyword>
<keyword id="KW-0150">Chloroplast</keyword>
<keyword id="KW-0456">Lyase</keyword>
<keyword id="KW-0934">Plastid</keyword>
<keyword id="KW-0663">Pyridoxal phosphate</keyword>
<keyword id="KW-0809">Transit peptide</keyword>
<protein>
    <recommendedName>
        <fullName evidence="8">Ornithine decarboxylase, chloroplastic</fullName>
        <ecNumber evidence="4">4.1.1.17</ecNumber>
    </recommendedName>
</protein>
<proteinExistence type="evidence at transcript level"/>
<name>ODC_NICGL</name>
<dbReference type="EC" id="4.1.1.17" evidence="4"/>
<dbReference type="EMBL" id="FR691072">
    <property type="protein sequence ID" value="CBX19979.1"/>
    <property type="molecule type" value="Genomic_DNA"/>
</dbReference>
<dbReference type="SMR" id="E0WN94"/>
<dbReference type="UniPathway" id="UPA00107"/>
<dbReference type="UniPathway" id="UPA00535">
    <property type="reaction ID" value="UER00288"/>
</dbReference>
<dbReference type="GO" id="GO:0009507">
    <property type="term" value="C:chloroplast"/>
    <property type="evidence" value="ECO:0007669"/>
    <property type="project" value="UniProtKB-SubCell"/>
</dbReference>
<dbReference type="GO" id="GO:0004586">
    <property type="term" value="F:ornithine decarboxylase activity"/>
    <property type="evidence" value="ECO:0007669"/>
    <property type="project" value="UniProtKB-EC"/>
</dbReference>
<dbReference type="GO" id="GO:0009820">
    <property type="term" value="P:alkaloid metabolic process"/>
    <property type="evidence" value="ECO:0007669"/>
    <property type="project" value="UniProtKB-KW"/>
</dbReference>
<dbReference type="GO" id="GO:0042179">
    <property type="term" value="P:nicotine biosynthetic process"/>
    <property type="evidence" value="ECO:0000315"/>
    <property type="project" value="UniProtKB"/>
</dbReference>
<dbReference type="GO" id="GO:0033387">
    <property type="term" value="P:putrescine biosynthetic process from arginine, via ornithine"/>
    <property type="evidence" value="ECO:0007669"/>
    <property type="project" value="UniProtKB-UniPathway"/>
</dbReference>
<dbReference type="GO" id="GO:0009753">
    <property type="term" value="P:response to jasmonic acid"/>
    <property type="evidence" value="ECO:0000315"/>
    <property type="project" value="UniProtKB"/>
</dbReference>
<dbReference type="GO" id="GO:0009611">
    <property type="term" value="P:response to wounding"/>
    <property type="evidence" value="ECO:0000315"/>
    <property type="project" value="UniProtKB"/>
</dbReference>
<dbReference type="CDD" id="cd00622">
    <property type="entry name" value="PLPDE_III_ODC"/>
    <property type="match status" value="1"/>
</dbReference>
<dbReference type="FunFam" id="3.20.20.10:FF:000005">
    <property type="entry name" value="Ornithine decarboxylase"/>
    <property type="match status" value="1"/>
</dbReference>
<dbReference type="Gene3D" id="3.20.20.10">
    <property type="entry name" value="Alanine racemase"/>
    <property type="match status" value="1"/>
</dbReference>
<dbReference type="Gene3D" id="2.40.37.10">
    <property type="entry name" value="Lyase, Ornithine Decarboxylase, Chain A, domain 1"/>
    <property type="match status" value="1"/>
</dbReference>
<dbReference type="InterPro" id="IPR009006">
    <property type="entry name" value="Ala_racemase/Decarboxylase_C"/>
</dbReference>
<dbReference type="InterPro" id="IPR022643">
    <property type="entry name" value="De-COase2_C"/>
</dbReference>
<dbReference type="InterPro" id="IPR022657">
    <property type="entry name" value="De-COase2_CS"/>
</dbReference>
<dbReference type="InterPro" id="IPR022644">
    <property type="entry name" value="De-COase2_N"/>
</dbReference>
<dbReference type="InterPro" id="IPR022653">
    <property type="entry name" value="De-COase2_pyr-phos_BS"/>
</dbReference>
<dbReference type="InterPro" id="IPR000183">
    <property type="entry name" value="Orn/DAP/Arg_de-COase"/>
</dbReference>
<dbReference type="InterPro" id="IPR002433">
    <property type="entry name" value="Orn_de-COase"/>
</dbReference>
<dbReference type="InterPro" id="IPR029066">
    <property type="entry name" value="PLP-binding_barrel"/>
</dbReference>
<dbReference type="PANTHER" id="PTHR11482">
    <property type="entry name" value="ARGININE/DIAMINOPIMELATE/ORNITHINE DECARBOXYLASE"/>
    <property type="match status" value="1"/>
</dbReference>
<dbReference type="PANTHER" id="PTHR11482:SF6">
    <property type="entry name" value="ORNITHINE DECARBOXYLASE 1-RELATED"/>
    <property type="match status" value="1"/>
</dbReference>
<dbReference type="Pfam" id="PF02784">
    <property type="entry name" value="Orn_Arg_deC_N"/>
    <property type="match status" value="1"/>
</dbReference>
<dbReference type="Pfam" id="PF00278">
    <property type="entry name" value="Orn_DAP_Arg_deC"/>
    <property type="match status" value="1"/>
</dbReference>
<dbReference type="PRINTS" id="PR01179">
    <property type="entry name" value="ODADCRBXLASE"/>
</dbReference>
<dbReference type="PRINTS" id="PR01182">
    <property type="entry name" value="ORNDCRBXLASE"/>
</dbReference>
<dbReference type="SUPFAM" id="SSF50621">
    <property type="entry name" value="Alanine racemase C-terminal domain-like"/>
    <property type="match status" value="1"/>
</dbReference>
<dbReference type="SUPFAM" id="SSF51419">
    <property type="entry name" value="PLP-binding barrel"/>
    <property type="match status" value="1"/>
</dbReference>
<dbReference type="PROSITE" id="PS00878">
    <property type="entry name" value="ODR_DC_2_1"/>
    <property type="match status" value="1"/>
</dbReference>
<dbReference type="PROSITE" id="PS00879">
    <property type="entry name" value="ODR_DC_2_2"/>
    <property type="match status" value="1"/>
</dbReference>
<feature type="transit peptide" description="Chloroplast" evidence="5">
    <location>
        <begin position="1"/>
        <end status="unknown"/>
    </location>
</feature>
<feature type="chain" id="PRO_0000455777" description="Ornithine decarboxylase, chloroplastic">
    <location>
        <begin status="unknown"/>
        <end position="433"/>
    </location>
</feature>
<feature type="active site" description="Proton donor; shared with dimeric partner" evidence="4">
    <location>
        <position position="378"/>
    </location>
</feature>
<feature type="binding site" evidence="4">
    <location>
        <position position="228"/>
    </location>
    <ligand>
        <name>pyridoxal 5'-phosphate</name>
        <dbReference type="ChEBI" id="CHEBI:597326"/>
    </ligand>
</feature>
<feature type="binding site" evidence="4">
    <location>
        <position position="266"/>
    </location>
    <ligand>
        <name>pyridoxal 5'-phosphate</name>
        <dbReference type="ChEBI" id="CHEBI:597326"/>
    </ligand>
</feature>
<feature type="binding site" evidence="4">
    <location>
        <begin position="299"/>
        <end position="302"/>
    </location>
    <ligand>
        <name>pyridoxal 5'-phosphate</name>
        <dbReference type="ChEBI" id="CHEBI:597326"/>
    </ligand>
</feature>
<feature type="binding site" description="in other chain" evidence="3">
    <location>
        <begin position="342"/>
        <end position="343"/>
    </location>
    <ligand>
        <name>substrate</name>
        <note>ligand shared between dimeric partners</note>
    </ligand>
</feature>
<feature type="binding site" evidence="3">
    <location>
        <position position="379"/>
    </location>
    <ligand>
        <name>substrate</name>
        <note>ligand shared between dimeric partners</note>
    </ligand>
</feature>
<feature type="binding site" evidence="4">
    <location>
        <position position="407"/>
    </location>
    <ligand>
        <name>pyridoxal 5'-phosphate</name>
        <dbReference type="ChEBI" id="CHEBI:597326"/>
    </ligand>
</feature>
<feature type="site" description="Stacks against the aromatic ring of pyridoxal phosphate and stabilizes reaction intermediates" evidence="2">
    <location>
        <position position="225"/>
    </location>
</feature>
<feature type="modified residue" description="N6-(pyridoxal phosphate)lysine" evidence="4">
    <location>
        <position position="96"/>
    </location>
</feature>
<gene>
    <name evidence="8" type="primary">ODC</name>
</gene>
<organism>
    <name type="scientific">Nicotiana glauca</name>
    <name type="common">Glaucous tobacco</name>
    <name type="synonym">Tree tobacco</name>
    <dbReference type="NCBI Taxonomy" id="4090"/>
    <lineage>
        <taxon>Eukaryota</taxon>
        <taxon>Viridiplantae</taxon>
        <taxon>Streptophyta</taxon>
        <taxon>Embryophyta</taxon>
        <taxon>Tracheophyta</taxon>
        <taxon>Spermatophyta</taxon>
        <taxon>Magnoliopsida</taxon>
        <taxon>eudicotyledons</taxon>
        <taxon>Gunneridae</taxon>
        <taxon>Pentapetalae</taxon>
        <taxon>asterids</taxon>
        <taxon>lamiids</taxon>
        <taxon>Solanales</taxon>
        <taxon>Solanaceae</taxon>
        <taxon>Nicotianoideae</taxon>
        <taxon>Nicotianeae</taxon>
        <taxon>Nicotiana</taxon>
    </lineage>
</organism>